<dbReference type="EC" id="6.1.1.15" evidence="1"/>
<dbReference type="EMBL" id="CR626927">
    <property type="protein sequence ID" value="CAH08215.1"/>
    <property type="molecule type" value="Genomic_DNA"/>
</dbReference>
<dbReference type="RefSeq" id="WP_005793720.1">
    <property type="nucleotide sequence ID" value="NZ_UFTH01000001.1"/>
</dbReference>
<dbReference type="SMR" id="Q5LCF0"/>
<dbReference type="PaxDb" id="272559-BF9343_2434"/>
<dbReference type="GeneID" id="60368806"/>
<dbReference type="KEGG" id="bfs:BF9343_2434"/>
<dbReference type="eggNOG" id="COG0442">
    <property type="taxonomic scope" value="Bacteria"/>
</dbReference>
<dbReference type="HOGENOM" id="CLU_001882_4_2_10"/>
<dbReference type="Proteomes" id="UP000006731">
    <property type="component" value="Chromosome"/>
</dbReference>
<dbReference type="GO" id="GO:0017101">
    <property type="term" value="C:aminoacyl-tRNA synthetase multienzyme complex"/>
    <property type="evidence" value="ECO:0007669"/>
    <property type="project" value="TreeGrafter"/>
</dbReference>
<dbReference type="GO" id="GO:0005737">
    <property type="term" value="C:cytoplasm"/>
    <property type="evidence" value="ECO:0007669"/>
    <property type="project" value="UniProtKB-SubCell"/>
</dbReference>
<dbReference type="GO" id="GO:0005524">
    <property type="term" value="F:ATP binding"/>
    <property type="evidence" value="ECO:0007669"/>
    <property type="project" value="UniProtKB-UniRule"/>
</dbReference>
<dbReference type="GO" id="GO:0004827">
    <property type="term" value="F:proline-tRNA ligase activity"/>
    <property type="evidence" value="ECO:0007669"/>
    <property type="project" value="UniProtKB-UniRule"/>
</dbReference>
<dbReference type="GO" id="GO:0006433">
    <property type="term" value="P:prolyl-tRNA aminoacylation"/>
    <property type="evidence" value="ECO:0007669"/>
    <property type="project" value="UniProtKB-UniRule"/>
</dbReference>
<dbReference type="CDD" id="cd00862">
    <property type="entry name" value="ProRS_anticodon_zinc"/>
    <property type="match status" value="1"/>
</dbReference>
<dbReference type="CDD" id="cd00778">
    <property type="entry name" value="ProRS_core_arch_euk"/>
    <property type="match status" value="1"/>
</dbReference>
<dbReference type="FunFam" id="3.40.50.800:FF:000005">
    <property type="entry name" value="bifunctional glutamate/proline--tRNA ligase"/>
    <property type="match status" value="1"/>
</dbReference>
<dbReference type="FunFam" id="3.30.930.10:FF:000023">
    <property type="entry name" value="Proline--tRNA ligase"/>
    <property type="match status" value="1"/>
</dbReference>
<dbReference type="Gene3D" id="3.40.50.800">
    <property type="entry name" value="Anticodon-binding domain"/>
    <property type="match status" value="1"/>
</dbReference>
<dbReference type="Gene3D" id="3.30.930.10">
    <property type="entry name" value="Bira Bifunctional Protein, Domain 2"/>
    <property type="match status" value="1"/>
</dbReference>
<dbReference type="Gene3D" id="3.30.110.30">
    <property type="entry name" value="C-terminal domain of ProRS"/>
    <property type="match status" value="1"/>
</dbReference>
<dbReference type="HAMAP" id="MF_01571">
    <property type="entry name" value="Pro_tRNA_synth_type3"/>
    <property type="match status" value="1"/>
</dbReference>
<dbReference type="InterPro" id="IPR002314">
    <property type="entry name" value="aa-tRNA-synt_IIb"/>
</dbReference>
<dbReference type="InterPro" id="IPR006195">
    <property type="entry name" value="aa-tRNA-synth_II"/>
</dbReference>
<dbReference type="InterPro" id="IPR045864">
    <property type="entry name" value="aa-tRNA-synth_II/BPL/LPL"/>
</dbReference>
<dbReference type="InterPro" id="IPR004154">
    <property type="entry name" value="Anticodon-bd"/>
</dbReference>
<dbReference type="InterPro" id="IPR036621">
    <property type="entry name" value="Anticodon-bd_dom_sf"/>
</dbReference>
<dbReference type="InterPro" id="IPR004499">
    <property type="entry name" value="Pro-tRNA-ligase_IIa_arc-type"/>
</dbReference>
<dbReference type="InterPro" id="IPR016061">
    <property type="entry name" value="Pro-tRNA_ligase_II_C"/>
</dbReference>
<dbReference type="InterPro" id="IPR017449">
    <property type="entry name" value="Pro-tRNA_synth_II"/>
</dbReference>
<dbReference type="InterPro" id="IPR033721">
    <property type="entry name" value="ProRS_core_arch_euk"/>
</dbReference>
<dbReference type="NCBIfam" id="TIGR00408">
    <property type="entry name" value="proS_fam_I"/>
    <property type="match status" value="1"/>
</dbReference>
<dbReference type="PANTHER" id="PTHR43382:SF2">
    <property type="entry name" value="BIFUNCTIONAL GLUTAMATE_PROLINE--TRNA LIGASE"/>
    <property type="match status" value="1"/>
</dbReference>
<dbReference type="PANTHER" id="PTHR43382">
    <property type="entry name" value="PROLYL-TRNA SYNTHETASE"/>
    <property type="match status" value="1"/>
</dbReference>
<dbReference type="Pfam" id="PF03129">
    <property type="entry name" value="HGTP_anticodon"/>
    <property type="match status" value="1"/>
</dbReference>
<dbReference type="Pfam" id="PF09180">
    <property type="entry name" value="ProRS-C_1"/>
    <property type="match status" value="1"/>
</dbReference>
<dbReference type="Pfam" id="PF00587">
    <property type="entry name" value="tRNA-synt_2b"/>
    <property type="match status" value="1"/>
</dbReference>
<dbReference type="SMART" id="SM00946">
    <property type="entry name" value="ProRS-C_1"/>
    <property type="match status" value="1"/>
</dbReference>
<dbReference type="SUPFAM" id="SSF64586">
    <property type="entry name" value="C-terminal domain of ProRS"/>
    <property type="match status" value="1"/>
</dbReference>
<dbReference type="SUPFAM" id="SSF52954">
    <property type="entry name" value="Class II aaRS ABD-related"/>
    <property type="match status" value="1"/>
</dbReference>
<dbReference type="SUPFAM" id="SSF55681">
    <property type="entry name" value="Class II aaRS and biotin synthetases"/>
    <property type="match status" value="1"/>
</dbReference>
<dbReference type="PROSITE" id="PS50862">
    <property type="entry name" value="AA_TRNA_LIGASE_II"/>
    <property type="match status" value="1"/>
</dbReference>
<reference key="1">
    <citation type="journal article" date="2005" name="Science">
        <title>Extensive DNA inversions in the B. fragilis genome control variable gene expression.</title>
        <authorList>
            <person name="Cerdeno-Tarraga A.-M."/>
            <person name="Patrick S."/>
            <person name="Crossman L.C."/>
            <person name="Blakely G."/>
            <person name="Abratt V."/>
            <person name="Lennard N."/>
            <person name="Poxton I."/>
            <person name="Duerden B."/>
            <person name="Harris B."/>
            <person name="Quail M.A."/>
            <person name="Barron A."/>
            <person name="Clark L."/>
            <person name="Corton C."/>
            <person name="Doggett J."/>
            <person name="Holden M.T.G."/>
            <person name="Larke N."/>
            <person name="Line A."/>
            <person name="Lord A."/>
            <person name="Norbertczak H."/>
            <person name="Ormond D."/>
            <person name="Price C."/>
            <person name="Rabbinowitsch E."/>
            <person name="Woodward J."/>
            <person name="Barrell B.G."/>
            <person name="Parkhill J."/>
        </authorList>
    </citation>
    <scope>NUCLEOTIDE SEQUENCE [LARGE SCALE GENOMIC DNA]</scope>
    <source>
        <strain>ATCC 25285 / DSM 2151 / CCUG 4856 / JCM 11019 / LMG 10263 / NCTC 9343 / Onslow / VPI 2553 / EN-2</strain>
    </source>
</reference>
<organism>
    <name type="scientific">Bacteroides fragilis (strain ATCC 25285 / DSM 2151 / CCUG 4856 / JCM 11019 / LMG 10263 / NCTC 9343 / Onslow / VPI 2553 / EN-2)</name>
    <dbReference type="NCBI Taxonomy" id="272559"/>
    <lineage>
        <taxon>Bacteria</taxon>
        <taxon>Pseudomonadati</taxon>
        <taxon>Bacteroidota</taxon>
        <taxon>Bacteroidia</taxon>
        <taxon>Bacteroidales</taxon>
        <taxon>Bacteroidaceae</taxon>
        <taxon>Bacteroides</taxon>
    </lineage>
</organism>
<name>SYP_BACFN</name>
<feature type="chain" id="PRO_0000249120" description="Proline--tRNA ligase">
    <location>
        <begin position="1"/>
        <end position="497"/>
    </location>
</feature>
<proteinExistence type="inferred from homology"/>
<accession>Q5LCF0</accession>
<comment type="function">
    <text evidence="1">Catalyzes the attachment of proline to tRNA(Pro) in a two-step reaction: proline is first activated by ATP to form Pro-AMP and then transferred to the acceptor end of tRNA(Pro).</text>
</comment>
<comment type="catalytic activity">
    <reaction evidence="1">
        <text>tRNA(Pro) + L-proline + ATP = L-prolyl-tRNA(Pro) + AMP + diphosphate</text>
        <dbReference type="Rhea" id="RHEA:14305"/>
        <dbReference type="Rhea" id="RHEA-COMP:9700"/>
        <dbReference type="Rhea" id="RHEA-COMP:9702"/>
        <dbReference type="ChEBI" id="CHEBI:30616"/>
        <dbReference type="ChEBI" id="CHEBI:33019"/>
        <dbReference type="ChEBI" id="CHEBI:60039"/>
        <dbReference type="ChEBI" id="CHEBI:78442"/>
        <dbReference type="ChEBI" id="CHEBI:78532"/>
        <dbReference type="ChEBI" id="CHEBI:456215"/>
        <dbReference type="EC" id="6.1.1.15"/>
    </reaction>
</comment>
<comment type="subunit">
    <text evidence="1">Homodimer.</text>
</comment>
<comment type="subcellular location">
    <subcellularLocation>
        <location evidence="1">Cytoplasm</location>
    </subcellularLocation>
</comment>
<comment type="domain">
    <text evidence="1">Consists of three domains: the N-terminal catalytic domain, the anticodon-binding domain and the C-terminal extension.</text>
</comment>
<comment type="similarity">
    <text evidence="1">Belongs to the class-II aminoacyl-tRNA synthetase family. ProS type 3 subfamily.</text>
</comment>
<evidence type="ECO:0000255" key="1">
    <source>
        <dbReference type="HAMAP-Rule" id="MF_01571"/>
    </source>
</evidence>
<sequence length="497" mass="56954">MAKELKDLTKRSENYSQWYNDLVVKADLAEQSAVRGCMVIKPYGYAIWEKMQRQLDDMFKETGHVNAYFPLLIPKSFLSREAEHVEGFAKECAVVTHYRLKNAEDGSGVVVDPAAKLEEELIIRPTSETIIWNTYKNWIQSYRDLPILCNQWANVFRWEMRTRLFLRTAEFLWQEGHTAHATREEAEEEAIRMLNVYAEFAEKYMAVPVVKGVKSANERFAGALDTYTIEAMMQDGKALQSGTSHFLGQNFAKAFDVQFVNKENKLEYVWATSWGVSTRLMGALIMTHSDDNGLVLPPHLAPIQVVIVPIYKNDEQLKLIDAKVEGIVARLKQLGISVKYDNADNKRPGFKFADYELKGVPVRLVMGGRDLENNTMEVMRRDTLEKETVTCDGIETYVQNLLEEIQANIYKKARTYRDSRITTVDSYDEFKEKIEEGGFILAHWDGTVETEEKIKEETKATIRCIPFESFVEGDKEPGKCMVTGKPSACRVIFARSY</sequence>
<keyword id="KW-0030">Aminoacyl-tRNA synthetase</keyword>
<keyword id="KW-0067">ATP-binding</keyword>
<keyword id="KW-0963">Cytoplasm</keyword>
<keyword id="KW-0436">Ligase</keyword>
<keyword id="KW-0547">Nucleotide-binding</keyword>
<keyword id="KW-0648">Protein biosynthesis</keyword>
<protein>
    <recommendedName>
        <fullName evidence="1">Proline--tRNA ligase</fullName>
        <ecNumber evidence="1">6.1.1.15</ecNumber>
    </recommendedName>
    <alternativeName>
        <fullName evidence="1">Prolyl-tRNA synthetase</fullName>
        <shortName evidence="1">ProRS</shortName>
    </alternativeName>
</protein>
<gene>
    <name evidence="1" type="primary">proS</name>
    <name type="ordered locus">BF2515</name>
</gene>